<dbReference type="EC" id="1.17.7.4" evidence="2"/>
<dbReference type="EMBL" id="JAATIP010000146">
    <property type="protein sequence ID" value="KAF4366915.1"/>
    <property type="molecule type" value="Genomic_DNA"/>
</dbReference>
<dbReference type="EMBL" id="JAATIQ010000418">
    <property type="protein sequence ID" value="KAF4356918.1"/>
    <property type="status" value="ALT_SEQ"/>
    <property type="molecule type" value="Genomic_DNA"/>
</dbReference>
<dbReference type="EMBL" id="UZAU01000015">
    <property type="status" value="NOT_ANNOTATED_CDS"/>
    <property type="molecule type" value="Genomic_DNA"/>
</dbReference>
<dbReference type="EMBL" id="KY014579">
    <property type="protein sequence ID" value="ARE72274.1"/>
    <property type="molecule type" value="mRNA"/>
</dbReference>
<dbReference type="SMR" id="A0A7J6F8C5"/>
<dbReference type="OMA" id="DRIWLTN"/>
<dbReference type="OrthoDB" id="1698201at2759"/>
<dbReference type="UniPathway" id="UPA00056">
    <property type="reaction ID" value="UER00097"/>
</dbReference>
<dbReference type="UniPathway" id="UPA00059">
    <property type="reaction ID" value="UER00105"/>
</dbReference>
<dbReference type="Proteomes" id="UP000525078">
    <property type="component" value="Unassembled WGS sequence"/>
</dbReference>
<dbReference type="Proteomes" id="UP000583929">
    <property type="component" value="Unassembled WGS sequence"/>
</dbReference>
<dbReference type="Proteomes" id="UP000596661">
    <property type="component" value="Chromosome 1"/>
</dbReference>
<dbReference type="GO" id="GO:0009570">
    <property type="term" value="C:chloroplast stroma"/>
    <property type="evidence" value="ECO:0007669"/>
    <property type="project" value="UniProtKB-SubCell"/>
</dbReference>
<dbReference type="GO" id="GO:0051539">
    <property type="term" value="F:4 iron, 4 sulfur cluster binding"/>
    <property type="evidence" value="ECO:0007669"/>
    <property type="project" value="UniProtKB-KW"/>
</dbReference>
<dbReference type="GO" id="GO:0051745">
    <property type="term" value="F:4-hydroxy-3-methylbut-2-enyl diphosphate reductase activity"/>
    <property type="evidence" value="ECO:0007669"/>
    <property type="project" value="InterPro"/>
</dbReference>
<dbReference type="GO" id="GO:0046872">
    <property type="term" value="F:metal ion binding"/>
    <property type="evidence" value="ECO:0007669"/>
    <property type="project" value="UniProtKB-KW"/>
</dbReference>
<dbReference type="GO" id="GO:0050992">
    <property type="term" value="P:dimethylallyl diphosphate biosynthetic process"/>
    <property type="evidence" value="ECO:0007669"/>
    <property type="project" value="InterPro"/>
</dbReference>
<dbReference type="GO" id="GO:0019288">
    <property type="term" value="P:isopentenyl diphosphate biosynthetic process, methylerythritol 4-phosphate pathway"/>
    <property type="evidence" value="ECO:0007669"/>
    <property type="project" value="InterPro"/>
</dbReference>
<dbReference type="CDD" id="cd13944">
    <property type="entry name" value="lytB_ispH"/>
    <property type="match status" value="1"/>
</dbReference>
<dbReference type="Gene3D" id="3.40.50.11270">
    <property type="match status" value="1"/>
</dbReference>
<dbReference type="Gene3D" id="3.40.1010.20">
    <property type="entry name" value="4-hydroxy-3-methylbut-2-enyl diphosphate reductase, catalytic domain"/>
    <property type="match status" value="2"/>
</dbReference>
<dbReference type="HAMAP" id="MF_00191">
    <property type="entry name" value="IspH"/>
    <property type="match status" value="1"/>
</dbReference>
<dbReference type="InterPro" id="IPR003451">
    <property type="entry name" value="LytB/IspH"/>
</dbReference>
<dbReference type="NCBIfam" id="TIGR00216">
    <property type="entry name" value="ispH_lytB"/>
    <property type="match status" value="1"/>
</dbReference>
<dbReference type="NCBIfam" id="NF009911">
    <property type="entry name" value="PRK13371.1"/>
    <property type="match status" value="1"/>
</dbReference>
<dbReference type="PANTHER" id="PTHR31619">
    <property type="entry name" value="4-HYDROXY-3-METHYLBUT-2-ENYL DIPHOSPHATE REDUCTASE, CHLOROPLASTIC"/>
    <property type="match status" value="1"/>
</dbReference>
<dbReference type="PANTHER" id="PTHR31619:SF5">
    <property type="entry name" value="4-HYDROXY-3-METHYLBUT-2-ENYL DIPHOSPHATE REDUCTASE, CHLOROPLASTIC"/>
    <property type="match status" value="1"/>
</dbReference>
<dbReference type="Pfam" id="PF02401">
    <property type="entry name" value="LYTB"/>
    <property type="match status" value="1"/>
</dbReference>
<protein>
    <recommendedName>
        <fullName evidence="5">4-hydroxy-3-methylbut-2-enyl diphosphate reductase, chloroplastic</fullName>
        <shortName evidence="5">CsHDR</shortName>
        <ecNumber evidence="2">1.17.7.4</ecNumber>
    </recommendedName>
</protein>
<comment type="function">
    <text evidence="2">Enzyme of the plastid non-mevalonate pathway for isoprenoid biosynthesis that converts 1-hydroxy-2-methyl-2-(E)-butenyl 4-diphosphate into isopentenyl diphosphate (IPP) and dimethylallyl diphosphate (DMAPP). Is essential for chloroplast development.</text>
</comment>
<comment type="catalytic activity">
    <reaction evidence="2">
        <text>isopentenyl diphosphate + 2 oxidized [2Fe-2S]-[ferredoxin] + H2O = (2E)-4-hydroxy-3-methylbut-2-enyl diphosphate + 2 reduced [2Fe-2S]-[ferredoxin] + 2 H(+)</text>
        <dbReference type="Rhea" id="RHEA:24488"/>
        <dbReference type="Rhea" id="RHEA-COMP:10000"/>
        <dbReference type="Rhea" id="RHEA-COMP:10001"/>
        <dbReference type="ChEBI" id="CHEBI:15377"/>
        <dbReference type="ChEBI" id="CHEBI:15378"/>
        <dbReference type="ChEBI" id="CHEBI:33737"/>
        <dbReference type="ChEBI" id="CHEBI:33738"/>
        <dbReference type="ChEBI" id="CHEBI:128753"/>
        <dbReference type="ChEBI" id="CHEBI:128769"/>
        <dbReference type="EC" id="1.17.7.4"/>
    </reaction>
    <physiologicalReaction direction="right-to-left" evidence="2">
        <dbReference type="Rhea" id="RHEA:24490"/>
    </physiologicalReaction>
</comment>
<comment type="catalytic activity">
    <reaction evidence="2">
        <text>dimethylallyl diphosphate + 2 oxidized [2Fe-2S]-[ferredoxin] + H2O = (2E)-4-hydroxy-3-methylbut-2-enyl diphosphate + 2 reduced [2Fe-2S]-[ferredoxin] + 2 H(+)</text>
        <dbReference type="Rhea" id="RHEA:24825"/>
        <dbReference type="Rhea" id="RHEA-COMP:10000"/>
        <dbReference type="Rhea" id="RHEA-COMP:10001"/>
        <dbReference type="ChEBI" id="CHEBI:15377"/>
        <dbReference type="ChEBI" id="CHEBI:15378"/>
        <dbReference type="ChEBI" id="CHEBI:33737"/>
        <dbReference type="ChEBI" id="CHEBI:33738"/>
        <dbReference type="ChEBI" id="CHEBI:57623"/>
        <dbReference type="ChEBI" id="CHEBI:128753"/>
        <dbReference type="EC" id="1.17.7.4"/>
    </reaction>
    <physiologicalReaction direction="right-to-left" evidence="2">
        <dbReference type="Rhea" id="RHEA:24827"/>
    </physiologicalReaction>
</comment>
<comment type="cofactor">
    <cofactor evidence="1">
        <name>[4Fe-4S] cluster</name>
        <dbReference type="ChEBI" id="CHEBI:49883"/>
    </cofactor>
    <text evidence="1">Binds 1 [4Fe-4S] cluster per subunit.</text>
</comment>
<comment type="pathway">
    <text evidence="2">Isoprenoid biosynthesis; dimethylallyl diphosphate biosynthesis; dimethylallyl diphosphate from (2E)-4-hydroxy-3-methylbutenyl diphosphate: step 1/1.</text>
</comment>
<comment type="pathway">
    <text evidence="2">Isoprenoid biosynthesis; isopentenyl diphosphate biosynthesis via DXP pathway; isopentenyl diphosphate from 1-deoxy-D-xylulose 5-phosphate: step 6/6.</text>
</comment>
<comment type="subunit">
    <text evidence="1">Homodimer.</text>
</comment>
<comment type="subcellular location">
    <subcellularLocation>
        <location evidence="2">Plastid</location>
        <location evidence="2">Chloroplast stroma</location>
    </subcellularLocation>
</comment>
<comment type="tissue specificity">
    <text evidence="4">Mainly expressed in leaves and trichomes, and, to a lower extent, in roots, flowers and stems.</text>
</comment>
<comment type="similarity">
    <text evidence="6">Belongs to the IspH family.</text>
</comment>
<comment type="sequence caution" evidence="6">
    <conflict type="erroneous gene model prediction"/>
</comment>
<comment type="sequence caution" evidence="6">
    <conflict type="erroneous gene model prediction">
        <sequence resource="EMBL" id="UZAU01000015"/>
    </conflict>
</comment>
<gene>
    <name evidence="5" type="primary">HDR</name>
    <name evidence="8" type="ORF">F8388_013980</name>
    <name evidence="7" type="ORF">G4B88_008517</name>
</gene>
<reference key="1">
    <citation type="submission" date="2020-03" db="EMBL/GenBank/DDBJ databases">
        <title>Sequence and annotation of 42 cannabis genomes reveals extensive copy number variation in cannabinoid synthesis and pathogen resistance genes.</title>
        <authorList>
            <person name="Mckernan K.J."/>
            <person name="Helbert Y."/>
            <person name="Kane L.T."/>
            <person name="Ebling H."/>
            <person name="Zhang L."/>
            <person name="Liu B."/>
            <person name="Eaton Z."/>
            <person name="Mclaughlin S."/>
            <person name="Kingan S."/>
            <person name="Baybayan P."/>
            <person name="Concepcion G."/>
            <person name="Jordan M."/>
            <person name="Riva A."/>
            <person name="Barbazuk W."/>
            <person name="Harkins T."/>
        </authorList>
    </citation>
    <scope>NUCLEOTIDE SEQUENCE [LARGE SCALE GENOMIC DNA]</scope>
    <source>
        <strain>cv. Jamaican Lion 4</strain>
        <tissue>Leaf</tissue>
    </source>
</reference>
<reference key="2">
    <citation type="journal article" date="2017" name="PLoS ONE">
        <title>Terpene synthases from Cannabis sativa.</title>
        <authorList>
            <person name="Booth J.K."/>
            <person name="Page J.E."/>
            <person name="Bohlmann J."/>
        </authorList>
    </citation>
    <scope>NUCLEOTIDE SEQUENCE [MRNA] OF 55-462</scope>
    <scope>TISSUE SPECIFICITY</scope>
    <source>
        <strain>cv. Finola</strain>
        <strain>cv. Purple Kush TPS13</strain>
    </source>
</reference>
<name>HDR_CANSA</name>
<keyword id="KW-0004">4Fe-4S</keyword>
<keyword id="KW-0150">Chloroplast</keyword>
<keyword id="KW-0408">Iron</keyword>
<keyword id="KW-0411">Iron-sulfur</keyword>
<keyword id="KW-0479">Metal-binding</keyword>
<keyword id="KW-0560">Oxidoreductase</keyword>
<keyword id="KW-0934">Plastid</keyword>
<keyword id="KW-1185">Reference proteome</keyword>
<keyword id="KW-0809">Transit peptide</keyword>
<feature type="transit peptide" description="Chloroplast" evidence="3">
    <location>
        <begin position="1"/>
        <end position="66"/>
    </location>
</feature>
<feature type="chain" id="PRO_0000460886" description="4-hydroxy-3-methylbut-2-enyl diphosphate reductase, chloroplastic">
    <location>
        <begin position="67"/>
        <end position="464"/>
    </location>
</feature>
<feature type="active site" description="Proton donor" evidence="1">
    <location>
        <position position="241"/>
    </location>
</feature>
<feature type="binding site" evidence="1">
    <location>
        <position position="120"/>
    </location>
    <ligand>
        <name>[4Fe-4S] cluster</name>
        <dbReference type="ChEBI" id="CHEBI:49883"/>
    </ligand>
</feature>
<feature type="binding site" evidence="1">
    <location>
        <position position="150"/>
    </location>
    <ligand>
        <name>(2E)-4-hydroxy-3-methylbut-2-enyl diphosphate</name>
        <dbReference type="ChEBI" id="CHEBI:128753"/>
    </ligand>
</feature>
<feature type="binding site" evidence="1">
    <location>
        <position position="211"/>
    </location>
    <ligand>
        <name>[4Fe-4S] cluster</name>
        <dbReference type="ChEBI" id="CHEBI:49883"/>
    </ligand>
</feature>
<feature type="binding site" evidence="1">
    <location>
        <position position="239"/>
    </location>
    <ligand>
        <name>(2E)-4-hydroxy-3-methylbut-2-enyl diphosphate</name>
        <dbReference type="ChEBI" id="CHEBI:128753"/>
    </ligand>
</feature>
<feature type="binding site" evidence="1">
    <location>
        <position position="310"/>
    </location>
    <ligand>
        <name>(2E)-4-hydroxy-3-methylbut-2-enyl diphosphate</name>
        <dbReference type="ChEBI" id="CHEBI:128753"/>
    </ligand>
</feature>
<feature type="binding site" evidence="1">
    <location>
        <position position="348"/>
    </location>
    <ligand>
        <name>[4Fe-4S] cluster</name>
        <dbReference type="ChEBI" id="CHEBI:49883"/>
    </ligand>
</feature>
<feature type="binding site" evidence="1">
    <location>
        <begin position="377"/>
        <end position="379"/>
    </location>
    <ligand>
        <name>(2E)-4-hydroxy-3-methylbut-2-enyl diphosphate</name>
        <dbReference type="ChEBI" id="CHEBI:128753"/>
    </ligand>
</feature>
<feature type="binding site" evidence="1">
    <location>
        <position position="439"/>
    </location>
    <ligand>
        <name>(2E)-4-hydroxy-3-methylbut-2-enyl diphosphate</name>
        <dbReference type="ChEBI" id="CHEBI:128753"/>
    </ligand>
</feature>
<feature type="sequence conflict" description="In Ref. 1; UZAU01000015/KAF4356918." evidence="6" ref="1">
    <original>S</original>
    <variation>A</variation>
    <location>
        <position position="43"/>
    </location>
</feature>
<accession>A0A7J6F8C5</accession>
<accession>A0A1V0QSH9</accession>
<accession>A0A7J6EEL3</accession>
<accession>A0A803NP54</accession>
<organism>
    <name type="scientific">Cannabis sativa</name>
    <name type="common">Hemp</name>
    <name type="synonym">Marijuana</name>
    <dbReference type="NCBI Taxonomy" id="3483"/>
    <lineage>
        <taxon>Eukaryota</taxon>
        <taxon>Viridiplantae</taxon>
        <taxon>Streptophyta</taxon>
        <taxon>Embryophyta</taxon>
        <taxon>Tracheophyta</taxon>
        <taxon>Spermatophyta</taxon>
        <taxon>Magnoliopsida</taxon>
        <taxon>eudicotyledons</taxon>
        <taxon>Gunneridae</taxon>
        <taxon>Pentapetalae</taxon>
        <taxon>rosids</taxon>
        <taxon>fabids</taxon>
        <taxon>Rosales</taxon>
        <taxon>Cannabaceae</taxon>
        <taxon>Cannabis</taxon>
    </lineage>
</organism>
<sequence>MSITFQLCRIPIRTDLALAEPLSVTGTVTGTLRCRKPFVIRCSGESSSTAADSDFDAKVFRKNLVRSKNYNRKGFGHKEETLQLMDSEYTSDIIKTLKDNGNEYRWGNVTVKLAEAYGFCWGVERAVQIAYEARKQFPEEKIWITNEIIHNPTVNKRLEEMKVENIPIDEGRKQFEIVNKGDVVILPAFGAGVDEMLALSDRNVQIVDTTCPWVSKVWNTVEKHKKGEYTSIIHGKYAHEETIATASFAGTYIIVKNMKEAMYVCDYILGGQLDGSSSTREEFMEKFKNAVSKGFDPDKHLVKAGIANQTTMLKGETEEIGKLVERTMMQKYGVENINEHFQSFNTICDATQERQDAMYKMVEERIDLMLVVGGWNSSNTSHLQEIAEERGIPSYWIDSEQRIGPGNKIAYKLNHGELVEKENWLPEGPITVGVTSGASTPDKVVEDVLIKVFDLKSEEALQVA</sequence>
<evidence type="ECO:0000250" key="1">
    <source>
        <dbReference type="UniProtKB" id="P62623"/>
    </source>
</evidence>
<evidence type="ECO:0000250" key="2">
    <source>
        <dbReference type="UniProtKB" id="Q94B35"/>
    </source>
</evidence>
<evidence type="ECO:0000255" key="3"/>
<evidence type="ECO:0000269" key="4">
    <source>
    </source>
</evidence>
<evidence type="ECO:0000303" key="5">
    <source>
    </source>
</evidence>
<evidence type="ECO:0000305" key="6"/>
<evidence type="ECO:0000312" key="7">
    <source>
        <dbReference type="EMBL" id="KAF4356918.1"/>
    </source>
</evidence>
<evidence type="ECO:0000312" key="8">
    <source>
        <dbReference type="EMBL" id="KAF4366915.1"/>
    </source>
</evidence>
<proteinExistence type="evidence at transcript level"/>